<organism>
    <name type="scientific">Geobacillus sp. (strain WCH70)</name>
    <dbReference type="NCBI Taxonomy" id="471223"/>
    <lineage>
        <taxon>Bacteria</taxon>
        <taxon>Bacillati</taxon>
        <taxon>Bacillota</taxon>
        <taxon>Bacilli</taxon>
        <taxon>Bacillales</taxon>
        <taxon>Anoxybacillaceae</taxon>
        <taxon>Geobacillus</taxon>
    </lineage>
</organism>
<dbReference type="EMBL" id="CP001638">
    <property type="protein sequence ID" value="ACS23208.1"/>
    <property type="molecule type" value="Genomic_DNA"/>
</dbReference>
<dbReference type="SMR" id="C5D4K0"/>
<dbReference type="STRING" id="471223.GWCH70_0280"/>
<dbReference type="KEGG" id="gwc:GWCH70_0280"/>
<dbReference type="eggNOG" id="ENOG502ZFIH">
    <property type="taxonomic scope" value="Bacteria"/>
</dbReference>
<dbReference type="HOGENOM" id="CLU_148478_0_0_9"/>
<dbReference type="OrthoDB" id="2388985at2"/>
<dbReference type="GO" id="GO:0003729">
    <property type="term" value="F:mRNA binding"/>
    <property type="evidence" value="ECO:0007669"/>
    <property type="project" value="UniProtKB-UniRule"/>
</dbReference>
<dbReference type="GO" id="GO:0006547">
    <property type="term" value="P:L-histidine metabolic process"/>
    <property type="evidence" value="ECO:0007669"/>
    <property type="project" value="UniProtKB-UniRule"/>
</dbReference>
<dbReference type="GO" id="GO:0010628">
    <property type="term" value="P:positive regulation of gene expression"/>
    <property type="evidence" value="ECO:0007669"/>
    <property type="project" value="UniProtKB-UniRule"/>
</dbReference>
<dbReference type="Gene3D" id="3.40.1510.10">
    <property type="entry name" value="Hut operon regulatory protein HutP"/>
    <property type="match status" value="1"/>
</dbReference>
<dbReference type="HAMAP" id="MF_00779">
    <property type="entry name" value="HutP"/>
    <property type="match status" value="1"/>
</dbReference>
<dbReference type="InterPro" id="IPR015111">
    <property type="entry name" value="Regulatory_HutP"/>
</dbReference>
<dbReference type="InterPro" id="IPR023552">
    <property type="entry name" value="Regulatory_HutP_bacillales"/>
</dbReference>
<dbReference type="InterPro" id="IPR036482">
    <property type="entry name" value="Regulatory_HutP_sf"/>
</dbReference>
<dbReference type="NCBIfam" id="NF002838">
    <property type="entry name" value="PRK03065.1"/>
    <property type="match status" value="1"/>
</dbReference>
<dbReference type="Pfam" id="PF09021">
    <property type="entry name" value="HutP"/>
    <property type="match status" value="1"/>
</dbReference>
<dbReference type="SUPFAM" id="SSF111064">
    <property type="entry name" value="Hut operon positive regulatory protein HutP"/>
    <property type="match status" value="1"/>
</dbReference>
<gene>
    <name evidence="1" type="primary">hutP</name>
    <name type="ordered locus">GWCH70_0280</name>
</gene>
<comment type="function">
    <text evidence="1">Antiterminator that binds to cis-acting regulatory sequences on the mRNA in the presence of histidine, thereby suppressing transcription termination and activating the hut operon for histidine utilization.</text>
</comment>
<comment type="subunit">
    <text evidence="1">Homohexamer.</text>
</comment>
<comment type="similarity">
    <text evidence="1">Belongs to the HutP family.</text>
</comment>
<protein>
    <recommendedName>
        <fullName evidence="1">Hut operon positive regulatory protein</fullName>
    </recommendedName>
</protein>
<reference key="1">
    <citation type="submission" date="2009-06" db="EMBL/GenBank/DDBJ databases">
        <title>Complete sequence of chromosome of Geopacillus sp. WCH70.</title>
        <authorList>
            <consortium name="US DOE Joint Genome Institute"/>
            <person name="Lucas S."/>
            <person name="Copeland A."/>
            <person name="Lapidus A."/>
            <person name="Glavina del Rio T."/>
            <person name="Dalin E."/>
            <person name="Tice H."/>
            <person name="Bruce D."/>
            <person name="Goodwin L."/>
            <person name="Pitluck S."/>
            <person name="Chertkov O."/>
            <person name="Brettin T."/>
            <person name="Detter J.C."/>
            <person name="Han C."/>
            <person name="Larimer F."/>
            <person name="Land M."/>
            <person name="Hauser L."/>
            <person name="Kyrpides N."/>
            <person name="Mikhailova N."/>
            <person name="Brumm P."/>
            <person name="Mead D.A."/>
            <person name="Richardson P."/>
        </authorList>
    </citation>
    <scope>NUCLEOTIDE SEQUENCE [LARGE SCALE GENOMIC DNA]</scope>
    <source>
        <strain>WCH70</strain>
    </source>
</reference>
<keyword id="KW-0010">Activator</keyword>
<keyword id="KW-0369">Histidine metabolism</keyword>
<keyword id="KW-0694">RNA-binding</keyword>
<keyword id="KW-0804">Transcription</keyword>
<keyword id="KW-0805">Transcription regulation</keyword>
<feature type="chain" id="PRO_1000212920" description="Hut operon positive regulatory protein">
    <location>
        <begin position="1"/>
        <end position="149"/>
    </location>
</feature>
<proteinExistence type="inferred from homology"/>
<name>HUTP_GEOSW</name>
<evidence type="ECO:0000255" key="1">
    <source>
        <dbReference type="HAMAP-Rule" id="MF_00779"/>
    </source>
</evidence>
<sequence length="149" mass="16481">MLKQAKGRIGRNAVLLALFEEEEEGKITAHLDNLQWRYCKGKVGSMELQKIVASVETAAKRNNVVNGELYREMHALYHAVVEAVQGVTRGQVELGDLMRTVGLRFAVVRGNPYENSKEGEWIAVALYGTIGAPIRGLEHETIGLGINHI</sequence>
<accession>C5D4K0</accession>